<organism>
    <name type="scientific">Streptomyces lividans</name>
    <dbReference type="NCBI Taxonomy" id="1916"/>
    <lineage>
        <taxon>Bacteria</taxon>
        <taxon>Bacillati</taxon>
        <taxon>Actinomycetota</taxon>
        <taxon>Actinomycetes</taxon>
        <taxon>Kitasatosporales</taxon>
        <taxon>Streptomycetaceae</taxon>
        <taxon>Streptomyces</taxon>
    </lineage>
</organism>
<proteinExistence type="inferred from homology"/>
<feature type="signal peptide" description="Tat-type signal" evidence="1">
    <location>
        <begin position="1"/>
        <end position="27"/>
    </location>
</feature>
<feature type="chain" id="PRO_0000021669" description="Mercury resistance operon ORF3">
    <location>
        <begin position="28"/>
        <end position="189"/>
    </location>
</feature>
<feature type="domain" description="Thioredoxin" evidence="2">
    <location>
        <begin position="38"/>
        <end position="189"/>
    </location>
</feature>
<evidence type="ECO:0000255" key="1">
    <source>
        <dbReference type="PROSITE-ProRule" id="PRU00648"/>
    </source>
</evidence>
<evidence type="ECO:0000255" key="2">
    <source>
        <dbReference type="PROSITE-ProRule" id="PRU00691"/>
    </source>
</evidence>
<evidence type="ECO:0000305" key="3"/>
<name>MER3_STRLI</name>
<accession>P30343</accession>
<keyword id="KW-0475">Mercuric resistance</keyword>
<keyword id="KW-0476">Mercury</keyword>
<keyword id="KW-0964">Secreted</keyword>
<keyword id="KW-0732">Signal</keyword>
<comment type="function">
    <text>Probable mercury binding protein.</text>
</comment>
<comment type="subcellular location">
    <subcellularLocation>
        <location evidence="3">Secreted</location>
    </subcellularLocation>
</comment>
<comment type="PTM">
    <text>Predicted to be exported by the Tat system. The position of the signal peptide cleavage has not been experimentally proven.</text>
</comment>
<protein>
    <recommendedName>
        <fullName>Mercury resistance operon ORF3</fullName>
    </recommendedName>
</protein>
<dbReference type="EMBL" id="X65467">
    <property type="protein sequence ID" value="CAA46464.1"/>
    <property type="molecule type" value="Genomic_DNA"/>
</dbReference>
<dbReference type="PIR" id="S30172">
    <property type="entry name" value="S30172"/>
</dbReference>
<dbReference type="SMR" id="P30343"/>
<dbReference type="GO" id="GO:0005576">
    <property type="term" value="C:extracellular region"/>
    <property type="evidence" value="ECO:0007669"/>
    <property type="project" value="UniProtKB-SubCell"/>
</dbReference>
<dbReference type="GO" id="GO:0046689">
    <property type="term" value="P:response to mercury ion"/>
    <property type="evidence" value="ECO:0007669"/>
    <property type="project" value="UniProtKB-KW"/>
</dbReference>
<dbReference type="Gene3D" id="3.40.30.10">
    <property type="entry name" value="Glutaredoxin"/>
    <property type="match status" value="1"/>
</dbReference>
<dbReference type="InterPro" id="IPR006311">
    <property type="entry name" value="TAT_signal"/>
</dbReference>
<dbReference type="InterPro" id="IPR012336">
    <property type="entry name" value="Thioredoxin-like_fold"/>
</dbReference>
<dbReference type="InterPro" id="IPR036249">
    <property type="entry name" value="Thioredoxin-like_sf"/>
</dbReference>
<dbReference type="InterPro" id="IPR013766">
    <property type="entry name" value="Thioredoxin_domain"/>
</dbReference>
<dbReference type="Pfam" id="PF13905">
    <property type="entry name" value="Thioredoxin_8"/>
    <property type="match status" value="1"/>
</dbReference>
<dbReference type="SUPFAM" id="SSF52833">
    <property type="entry name" value="Thioredoxin-like"/>
    <property type="match status" value="1"/>
</dbReference>
<dbReference type="PROSITE" id="PS51318">
    <property type="entry name" value="TAT"/>
    <property type="match status" value="1"/>
</dbReference>
<dbReference type="PROSITE" id="PS51352">
    <property type="entry name" value="THIOREDOXIN_2"/>
    <property type="match status" value="1"/>
</dbReference>
<sequence length="189" mass="19346">MTSPSPTARRTRLRRRTALALAAAATAALTLSACGTDTKANTPATRAGSGNAAAAKADTVALLDDTTLAVPGDKPSALFFFSVGCGECAGGAKSLDKAAQAFDKAGKKANFLAVDMDPNESKQTIMQFLDYIKAPALPATIDKGAALSQRYQVAALSTLIVVAPQGKVTYRATDPSADQIQDALKKAGA</sequence>
<reference key="1">
    <citation type="journal article" date="1992" name="Mol. Gen. Genet.">
        <title>Cloning and DNA sequence analysis of the mercury resistance genes of Streptomyces lividans.</title>
        <authorList>
            <person name="Sedlmeier R."/>
            <person name="Altenbuchner J."/>
        </authorList>
    </citation>
    <scope>NUCLEOTIDE SEQUENCE [GENOMIC DNA]</scope>
    <source>
        <strain>66 / 1326</strain>
    </source>
</reference>